<keyword id="KW-0067">ATP-binding</keyword>
<keyword id="KW-0119">Carbohydrate metabolism</keyword>
<keyword id="KW-0418">Kinase</keyword>
<keyword id="KW-0511">Multifunctional enzyme</keyword>
<keyword id="KW-0547">Nucleotide-binding</keyword>
<keyword id="KW-0548">Nucleotidyltransferase</keyword>
<keyword id="KW-1185">Reference proteome</keyword>
<keyword id="KW-0808">Transferase</keyword>
<organism>
    <name type="scientific">Caulobacter vibrioides (strain ATCC 19089 / CIP 103742 / CB 15)</name>
    <name type="common">Caulobacter crescentus</name>
    <dbReference type="NCBI Taxonomy" id="190650"/>
    <lineage>
        <taxon>Bacteria</taxon>
        <taxon>Pseudomonadati</taxon>
        <taxon>Pseudomonadota</taxon>
        <taxon>Alphaproteobacteria</taxon>
        <taxon>Caulobacterales</taxon>
        <taxon>Caulobacteraceae</taxon>
        <taxon>Caulobacter</taxon>
    </lineage>
</organism>
<proteinExistence type="inferred from homology"/>
<name>HLDE_CAUVC</name>
<dbReference type="EC" id="2.7.1.167" evidence="1"/>
<dbReference type="EC" id="2.7.7.70" evidence="1"/>
<dbReference type="EMBL" id="AE005673">
    <property type="protein sequence ID" value="AAK25602.1"/>
    <property type="molecule type" value="Genomic_DNA"/>
</dbReference>
<dbReference type="PIR" id="F87700">
    <property type="entry name" value="F87700"/>
</dbReference>
<dbReference type="RefSeq" id="NP_422434.1">
    <property type="nucleotide sequence ID" value="NC_002696.2"/>
</dbReference>
<dbReference type="RefSeq" id="WP_010921467.1">
    <property type="nucleotide sequence ID" value="NC_002696.2"/>
</dbReference>
<dbReference type="SMR" id="Q9A2C5"/>
<dbReference type="STRING" id="190650.CC_3640"/>
<dbReference type="EnsemblBacteria" id="AAK25602">
    <property type="protein sequence ID" value="AAK25602"/>
    <property type="gene ID" value="CC_3640"/>
</dbReference>
<dbReference type="KEGG" id="ccr:CC_3640"/>
<dbReference type="PATRIC" id="fig|190650.5.peg.3642"/>
<dbReference type="eggNOG" id="COG0615">
    <property type="taxonomic scope" value="Bacteria"/>
</dbReference>
<dbReference type="eggNOG" id="COG2870">
    <property type="taxonomic scope" value="Bacteria"/>
</dbReference>
<dbReference type="HOGENOM" id="CLU_021150_2_1_5"/>
<dbReference type="BioCyc" id="CAULO:CC3640-MONOMER"/>
<dbReference type="UniPathway" id="UPA00356">
    <property type="reaction ID" value="UER00437"/>
</dbReference>
<dbReference type="UniPathway" id="UPA00356">
    <property type="reaction ID" value="UER00439"/>
</dbReference>
<dbReference type="Proteomes" id="UP000001816">
    <property type="component" value="Chromosome"/>
</dbReference>
<dbReference type="GO" id="GO:0005829">
    <property type="term" value="C:cytosol"/>
    <property type="evidence" value="ECO:0007669"/>
    <property type="project" value="TreeGrafter"/>
</dbReference>
<dbReference type="GO" id="GO:0005524">
    <property type="term" value="F:ATP binding"/>
    <property type="evidence" value="ECO:0007669"/>
    <property type="project" value="UniProtKB-UniRule"/>
</dbReference>
<dbReference type="GO" id="GO:0033785">
    <property type="term" value="F:heptose 7-phosphate kinase activity"/>
    <property type="evidence" value="ECO:0007669"/>
    <property type="project" value="UniProtKB-UniRule"/>
</dbReference>
<dbReference type="GO" id="GO:0033786">
    <property type="term" value="F:heptose-1-phosphate adenylyltransferase activity"/>
    <property type="evidence" value="ECO:0007669"/>
    <property type="project" value="UniProtKB-UniRule"/>
</dbReference>
<dbReference type="GO" id="GO:0016773">
    <property type="term" value="F:phosphotransferase activity, alcohol group as acceptor"/>
    <property type="evidence" value="ECO:0007669"/>
    <property type="project" value="InterPro"/>
</dbReference>
<dbReference type="GO" id="GO:0097171">
    <property type="term" value="P:ADP-L-glycero-beta-D-manno-heptose biosynthetic process"/>
    <property type="evidence" value="ECO:0007669"/>
    <property type="project" value="UniProtKB-UniPathway"/>
</dbReference>
<dbReference type="CDD" id="cd01172">
    <property type="entry name" value="RfaE_like"/>
    <property type="match status" value="1"/>
</dbReference>
<dbReference type="FunFam" id="3.40.1190.20:FF:000002">
    <property type="entry name" value="Bifunctional protein HldE"/>
    <property type="match status" value="1"/>
</dbReference>
<dbReference type="Gene3D" id="3.40.1190.20">
    <property type="match status" value="1"/>
</dbReference>
<dbReference type="Gene3D" id="3.40.50.620">
    <property type="entry name" value="HUPs"/>
    <property type="match status" value="1"/>
</dbReference>
<dbReference type="HAMAP" id="MF_01603">
    <property type="entry name" value="HldE"/>
    <property type="match status" value="1"/>
</dbReference>
<dbReference type="InterPro" id="IPR023030">
    <property type="entry name" value="Bifunc_HldE"/>
</dbReference>
<dbReference type="InterPro" id="IPR002173">
    <property type="entry name" value="Carboh/pur_kinase_PfkB_CS"/>
</dbReference>
<dbReference type="InterPro" id="IPR004821">
    <property type="entry name" value="Cyt_trans-like"/>
</dbReference>
<dbReference type="InterPro" id="IPR011611">
    <property type="entry name" value="PfkB_dom"/>
</dbReference>
<dbReference type="InterPro" id="IPR011913">
    <property type="entry name" value="RfaE_dom_I"/>
</dbReference>
<dbReference type="InterPro" id="IPR011914">
    <property type="entry name" value="RfaE_dom_II"/>
</dbReference>
<dbReference type="InterPro" id="IPR029056">
    <property type="entry name" value="Ribokinase-like"/>
</dbReference>
<dbReference type="InterPro" id="IPR014729">
    <property type="entry name" value="Rossmann-like_a/b/a_fold"/>
</dbReference>
<dbReference type="NCBIfam" id="TIGR00125">
    <property type="entry name" value="cyt_tran_rel"/>
    <property type="match status" value="1"/>
</dbReference>
<dbReference type="NCBIfam" id="TIGR02198">
    <property type="entry name" value="rfaE_dom_I"/>
    <property type="match status" value="1"/>
</dbReference>
<dbReference type="NCBIfam" id="TIGR02199">
    <property type="entry name" value="rfaE_dom_II"/>
    <property type="match status" value="1"/>
</dbReference>
<dbReference type="PANTHER" id="PTHR46969">
    <property type="entry name" value="BIFUNCTIONAL PROTEIN HLDE"/>
    <property type="match status" value="1"/>
</dbReference>
<dbReference type="PANTHER" id="PTHR46969:SF1">
    <property type="entry name" value="BIFUNCTIONAL PROTEIN HLDE"/>
    <property type="match status" value="1"/>
</dbReference>
<dbReference type="Pfam" id="PF01467">
    <property type="entry name" value="CTP_transf_like"/>
    <property type="match status" value="1"/>
</dbReference>
<dbReference type="Pfam" id="PF00294">
    <property type="entry name" value="PfkB"/>
    <property type="match status" value="1"/>
</dbReference>
<dbReference type="SUPFAM" id="SSF52374">
    <property type="entry name" value="Nucleotidylyl transferase"/>
    <property type="match status" value="1"/>
</dbReference>
<dbReference type="SUPFAM" id="SSF53613">
    <property type="entry name" value="Ribokinase-like"/>
    <property type="match status" value="1"/>
</dbReference>
<dbReference type="PROSITE" id="PS00583">
    <property type="entry name" value="PFKB_KINASES_1"/>
    <property type="match status" value="1"/>
</dbReference>
<reference key="1">
    <citation type="journal article" date="2001" name="Proc. Natl. Acad. Sci. U.S.A.">
        <title>Complete genome sequence of Caulobacter crescentus.</title>
        <authorList>
            <person name="Nierman W.C."/>
            <person name="Feldblyum T.V."/>
            <person name="Laub M.T."/>
            <person name="Paulsen I.T."/>
            <person name="Nelson K.E."/>
            <person name="Eisen J.A."/>
            <person name="Heidelberg J.F."/>
            <person name="Alley M.R.K."/>
            <person name="Ohta N."/>
            <person name="Maddock J.R."/>
            <person name="Potocka I."/>
            <person name="Nelson W.C."/>
            <person name="Newton A."/>
            <person name="Stephens C."/>
            <person name="Phadke N.D."/>
            <person name="Ely B."/>
            <person name="DeBoy R.T."/>
            <person name="Dodson R.J."/>
            <person name="Durkin A.S."/>
            <person name="Gwinn M.L."/>
            <person name="Haft D.H."/>
            <person name="Kolonay J.F."/>
            <person name="Smit J."/>
            <person name="Craven M.B."/>
            <person name="Khouri H.M."/>
            <person name="Shetty J."/>
            <person name="Berry K.J."/>
            <person name="Utterback T.R."/>
            <person name="Tran K."/>
            <person name="Wolf A.M."/>
            <person name="Vamathevan J.J."/>
            <person name="Ermolaeva M.D."/>
            <person name="White O."/>
            <person name="Salzberg S.L."/>
            <person name="Venter J.C."/>
            <person name="Shapiro L."/>
            <person name="Fraser C.M."/>
        </authorList>
    </citation>
    <scope>NUCLEOTIDE SEQUENCE [LARGE SCALE GENOMIC DNA]</scope>
    <source>
        <strain>ATCC 19089 / CIP 103742 / CB 15</strain>
    </source>
</reference>
<gene>
    <name evidence="1" type="primary">hldE</name>
    <name type="synonym">rfaE</name>
    <name type="ordered locus">CC_3640</name>
</gene>
<comment type="function">
    <text evidence="1">Catalyzes the phosphorylation of D-glycero-D-manno-heptose 7-phosphate at the C-1 position to selectively form D-glycero-beta-D-manno-heptose-1,7-bisphosphate.</text>
</comment>
<comment type="function">
    <text evidence="1">Catalyzes the ADP transfer from ATP to D-glycero-beta-D-manno-heptose 1-phosphate, yielding ADP-D-glycero-beta-D-manno-heptose.</text>
</comment>
<comment type="catalytic activity">
    <reaction evidence="1">
        <text>D-glycero-beta-D-manno-heptose 7-phosphate + ATP = D-glycero-beta-D-manno-heptose 1,7-bisphosphate + ADP + H(+)</text>
        <dbReference type="Rhea" id="RHEA:27473"/>
        <dbReference type="ChEBI" id="CHEBI:15378"/>
        <dbReference type="ChEBI" id="CHEBI:30616"/>
        <dbReference type="ChEBI" id="CHEBI:60204"/>
        <dbReference type="ChEBI" id="CHEBI:60208"/>
        <dbReference type="ChEBI" id="CHEBI:456216"/>
        <dbReference type="EC" id="2.7.1.167"/>
    </reaction>
</comment>
<comment type="catalytic activity">
    <reaction evidence="1">
        <text>D-glycero-beta-D-manno-heptose 1-phosphate + ATP + H(+) = ADP-D-glycero-beta-D-manno-heptose + diphosphate</text>
        <dbReference type="Rhea" id="RHEA:27465"/>
        <dbReference type="ChEBI" id="CHEBI:15378"/>
        <dbReference type="ChEBI" id="CHEBI:30616"/>
        <dbReference type="ChEBI" id="CHEBI:33019"/>
        <dbReference type="ChEBI" id="CHEBI:59967"/>
        <dbReference type="ChEBI" id="CHEBI:61593"/>
        <dbReference type="EC" id="2.7.7.70"/>
    </reaction>
</comment>
<comment type="pathway">
    <text evidence="1">Nucleotide-sugar biosynthesis; ADP-L-glycero-beta-D-manno-heptose biosynthesis; ADP-L-glycero-beta-D-manno-heptose from D-glycero-beta-D-manno-heptose 7-phosphate: step 1/4.</text>
</comment>
<comment type="pathway">
    <text evidence="1">Nucleotide-sugar biosynthesis; ADP-L-glycero-beta-D-manno-heptose biosynthesis; ADP-L-glycero-beta-D-manno-heptose from D-glycero-beta-D-manno-heptose 7-phosphate: step 3/4.</text>
</comment>
<comment type="subunit">
    <text evidence="1">Homodimer.</text>
</comment>
<comment type="similarity">
    <text evidence="1">In the N-terminal section; belongs to the carbohydrate kinase PfkB family.</text>
</comment>
<comment type="similarity">
    <text evidence="1">In the C-terminal section; belongs to the cytidylyltransferase family.</text>
</comment>
<feature type="chain" id="PRO_0000080105" description="Bifunctional protein HldE">
    <location>
        <begin position="1"/>
        <end position="483"/>
    </location>
</feature>
<feature type="region of interest" description="Ribokinase">
    <location>
        <begin position="1"/>
        <end position="327"/>
    </location>
</feature>
<feature type="region of interest" description="Cytidylyltransferase">
    <location>
        <begin position="354"/>
        <end position="483"/>
    </location>
</feature>
<feature type="active site" evidence="1">
    <location>
        <position position="272"/>
    </location>
</feature>
<feature type="binding site" evidence="1">
    <location>
        <begin position="201"/>
        <end position="204"/>
    </location>
    <ligand>
        <name>ATP</name>
        <dbReference type="ChEBI" id="CHEBI:30616"/>
    </ligand>
</feature>
<accession>Q9A2C5</accession>
<evidence type="ECO:0000255" key="1">
    <source>
        <dbReference type="HAMAP-Rule" id="MF_01603"/>
    </source>
</evidence>
<sequence>MDDALAHLPRAFAGKTVLVLGDVMLDRFIYGAVDRISPEAPVPVIAVEKETAMLGGAGNVARNVAALGAKAVLIGLVGRDDAGAALRGMIDAEAGLEAELVVDPARRTTEKVRYISGSHQMLRVDREDRSPGDGAALLAAFETRLASADVVVLSDYAKGVLTPAVVRGAIDAAKAAGKPVIVDPKSRDFARYDGATLIKPNRKEAAEATGIVETSDAASEDAGAAILAMAPGLQAALITRGGAGMTLAVRNQPPIHLPATAIEVFDVSGAGDTVAATLALAVAAGASLAQAAQLANLAGGLVVAKLGTDVVTAAELTACASSAQGEPGEIKIADREQAQRIVEGWRARGLKVGFTNGCFDLLHPGHVSLLSQAKAACDRLIVGLNTDASVSKLKGPTRPVQKEQGRATVLASLSSVDLVVLFDEDTPLELIKAFRPDVLVKGADYTVETVVGSDVVLGYGGKVVLAELKQGQSTTNLIARMNS</sequence>
<protein>
    <recommendedName>
        <fullName evidence="1">Bifunctional protein HldE</fullName>
    </recommendedName>
    <domain>
        <recommendedName>
            <fullName evidence="1">D-beta-D-heptose 7-phosphate kinase</fullName>
            <ecNumber evidence="1">2.7.1.167</ecNumber>
        </recommendedName>
        <alternativeName>
            <fullName evidence="1">D-beta-D-heptose 7-phosphotransferase</fullName>
        </alternativeName>
        <alternativeName>
            <fullName evidence="1">D-glycero-beta-D-manno-heptose-7-phosphate kinase</fullName>
        </alternativeName>
    </domain>
    <domain>
        <recommendedName>
            <fullName evidence="1">D-beta-D-heptose 1-phosphate adenylyltransferase</fullName>
            <ecNumber evidence="1">2.7.7.70</ecNumber>
        </recommendedName>
        <alternativeName>
            <fullName evidence="1">D-glycero-beta-D-manno-heptose 1-phosphate adenylyltransferase</fullName>
        </alternativeName>
    </domain>
</protein>